<dbReference type="EMBL" id="BC091217">
    <property type="protein sequence ID" value="AAH91217.1"/>
    <property type="molecule type" value="mRNA"/>
</dbReference>
<dbReference type="RefSeq" id="NP_001020309.1">
    <property type="nucleotide sequence ID" value="NM_001025138.2"/>
</dbReference>
<dbReference type="FunCoup" id="Q5BK38">
    <property type="interactions" value="78"/>
</dbReference>
<dbReference type="STRING" id="10116.ENSRNOP00000068932"/>
<dbReference type="GlyCosmos" id="Q5BK38">
    <property type="glycosylation" value="4 sites, No reported glycans"/>
</dbReference>
<dbReference type="GlyGen" id="Q5BK38">
    <property type="glycosylation" value="5 sites"/>
</dbReference>
<dbReference type="PhosphoSitePlus" id="Q5BK38"/>
<dbReference type="PaxDb" id="10116-ENSRNOP00000032292"/>
<dbReference type="Ensembl" id="ENSRNOT00000032273.5">
    <property type="protein sequence ID" value="ENSRNOP00000032292.4"/>
    <property type="gene ID" value="ENSRNOG00000026518.6"/>
</dbReference>
<dbReference type="GeneID" id="498365"/>
<dbReference type="KEGG" id="rno:498365"/>
<dbReference type="UCSC" id="RGD:1562424">
    <property type="organism name" value="rat"/>
</dbReference>
<dbReference type="AGR" id="RGD:1562424"/>
<dbReference type="CTD" id="80008"/>
<dbReference type="RGD" id="1562424">
    <property type="gene designation" value="Tmem156"/>
</dbReference>
<dbReference type="eggNOG" id="ENOG502SAF3">
    <property type="taxonomic scope" value="Eukaryota"/>
</dbReference>
<dbReference type="GeneTree" id="ENSGT00390000017929"/>
<dbReference type="InParanoid" id="Q5BK38"/>
<dbReference type="PhylomeDB" id="Q5BK38"/>
<dbReference type="TreeFam" id="TF336964"/>
<dbReference type="PRO" id="PR:Q5BK38"/>
<dbReference type="Proteomes" id="UP000002494">
    <property type="component" value="Chromosome 14"/>
</dbReference>
<dbReference type="Bgee" id="ENSRNOG00000026518">
    <property type="expression patterns" value="Expressed in thymus and 14 other cell types or tissues"/>
</dbReference>
<dbReference type="ExpressionAtlas" id="Q5BK38">
    <property type="expression patterns" value="baseline and differential"/>
</dbReference>
<dbReference type="GO" id="GO:0016020">
    <property type="term" value="C:membrane"/>
    <property type="evidence" value="ECO:0007669"/>
    <property type="project" value="UniProtKB-SubCell"/>
</dbReference>
<dbReference type="InterPro" id="IPR029374">
    <property type="entry name" value="TMEM156"/>
</dbReference>
<dbReference type="PANTHER" id="PTHR14788">
    <property type="entry name" value="TRANSMEMBRANE PROTEIN 156"/>
    <property type="match status" value="1"/>
</dbReference>
<dbReference type="PANTHER" id="PTHR14788:SF5">
    <property type="entry name" value="TRANSMEMBRANE PROTEIN 156"/>
    <property type="match status" value="1"/>
</dbReference>
<dbReference type="Pfam" id="PF15106">
    <property type="entry name" value="TMEM156"/>
    <property type="match status" value="1"/>
</dbReference>
<comment type="subcellular location">
    <subcellularLocation>
        <location evidence="2">Membrane</location>
        <topology evidence="2">Multi-pass membrane protein</topology>
    </subcellularLocation>
</comment>
<protein>
    <recommendedName>
        <fullName>Transmembrane protein 156</fullName>
    </recommendedName>
</protein>
<organism>
    <name type="scientific">Rattus norvegicus</name>
    <name type="common">Rat</name>
    <dbReference type="NCBI Taxonomy" id="10116"/>
    <lineage>
        <taxon>Eukaryota</taxon>
        <taxon>Metazoa</taxon>
        <taxon>Chordata</taxon>
        <taxon>Craniata</taxon>
        <taxon>Vertebrata</taxon>
        <taxon>Euteleostomi</taxon>
        <taxon>Mammalia</taxon>
        <taxon>Eutheria</taxon>
        <taxon>Euarchontoglires</taxon>
        <taxon>Glires</taxon>
        <taxon>Rodentia</taxon>
        <taxon>Myomorpha</taxon>
        <taxon>Muroidea</taxon>
        <taxon>Muridae</taxon>
        <taxon>Murinae</taxon>
        <taxon>Rattus</taxon>
    </lineage>
</organism>
<accession>Q5BK38</accession>
<evidence type="ECO:0000255" key="1"/>
<evidence type="ECO:0000305" key="2"/>
<feature type="chain" id="PRO_0000284506" description="Transmembrane protein 156">
    <location>
        <begin position="1"/>
        <end position="286"/>
    </location>
</feature>
<feature type="topological domain" description="Cytoplasmic" evidence="1">
    <location>
        <begin position="1"/>
        <end position="4"/>
    </location>
</feature>
<feature type="transmembrane region" description="Helical" evidence="1">
    <location>
        <begin position="5"/>
        <end position="25"/>
    </location>
</feature>
<feature type="topological domain" description="Extracellular" evidence="1">
    <location>
        <begin position="26"/>
        <end position="214"/>
    </location>
</feature>
<feature type="transmembrane region" description="Helical" evidence="1">
    <location>
        <begin position="215"/>
        <end position="235"/>
    </location>
</feature>
<feature type="topological domain" description="Cytoplasmic" evidence="1">
    <location>
        <begin position="236"/>
        <end position="286"/>
    </location>
</feature>
<feature type="glycosylation site" description="N-linked (GlcNAc...) asparagine" evidence="1">
    <location>
        <position position="45"/>
    </location>
</feature>
<feature type="glycosylation site" description="N-linked (GlcNAc...) asparagine" evidence="1">
    <location>
        <position position="54"/>
    </location>
</feature>
<feature type="glycosylation site" description="N-linked (GlcNAc...) asparagine" evidence="1">
    <location>
        <position position="76"/>
    </location>
</feature>
<feature type="glycosylation site" description="N-linked (GlcNAc...) asparagine" evidence="1">
    <location>
        <position position="142"/>
    </location>
</feature>
<keyword id="KW-0325">Glycoprotein</keyword>
<keyword id="KW-0472">Membrane</keyword>
<keyword id="KW-1185">Reference proteome</keyword>
<keyword id="KW-0812">Transmembrane</keyword>
<keyword id="KW-1133">Transmembrane helix</keyword>
<reference key="1">
    <citation type="journal article" date="2004" name="Genome Res.">
        <title>The status, quality, and expansion of the NIH full-length cDNA project: the Mammalian Gene Collection (MGC).</title>
        <authorList>
            <consortium name="The MGC Project Team"/>
        </authorList>
    </citation>
    <scope>NUCLEOTIDE SEQUENCE [LARGE SCALE MRNA]</scope>
    <source>
        <tissue>Thymus</tissue>
    </source>
</reference>
<name>TM156_RAT</name>
<proteinExistence type="evidence at transcript level"/>
<gene>
    <name type="primary">Tmem156</name>
</gene>
<sequence>MTETAFLKLFVAIVITFILVLPEFFKTPKERTLELSCLEVCFLPNSTYPLSSFNFSSVAFLQPAEETQTIMGILPNHSSFQSFAEICQGITSGLPMCSLCLVCESKGDVDFTSQEQTSKGLVMRGSKEVKASDFYSPCEYFNVTVALLADPVKEDTTCTPEGHPGEAIALDEDPVREKSLNHTCRFMKNTDNCTHIFLHLEMDVKSVTCSMKITWYVLVLFVFMLGIIFIIYKILEEHRRVWRRQSHNYKSSSVLFRGHDSGKLSTLNVRVIPGYPWTIWTRDFDE</sequence>